<gene>
    <name type="primary">zbtb8os</name>
    <name type="ORF">si:dkeyp-2e4.1</name>
    <name type="ORF">zgc:112460</name>
</gene>
<proteinExistence type="evidence at transcript level"/>
<feature type="chain" id="PRO_0000285952" description="Protein archease">
    <location>
        <begin position="1"/>
        <end position="162"/>
    </location>
</feature>
<feature type="binding site" evidence="1">
    <location>
        <position position="34"/>
    </location>
    <ligand>
        <name>Ca(2+)</name>
        <dbReference type="ChEBI" id="CHEBI:29108"/>
    </ligand>
</feature>
<feature type="binding site" evidence="1">
    <location>
        <position position="161"/>
    </location>
    <ligand>
        <name>Ca(2+)</name>
        <dbReference type="ChEBI" id="CHEBI:29108"/>
    </ligand>
</feature>
<feature type="binding site" evidence="1">
    <location>
        <position position="162"/>
    </location>
    <ligand>
        <name>Ca(2+)</name>
        <dbReference type="ChEBI" id="CHEBI:29108"/>
    </ligand>
</feature>
<feature type="sequence conflict" description="In Ref. 2; AAH93322." evidence="2" ref="2">
    <original>M</original>
    <variation>V</variation>
    <location>
        <position position="55"/>
    </location>
</feature>
<dbReference type="EMBL" id="CR376783">
    <property type="protein sequence ID" value="CAM12942.1"/>
    <property type="molecule type" value="Genomic_DNA"/>
</dbReference>
<dbReference type="EMBL" id="CR786566">
    <property type="protein sequence ID" value="CAM12942.1"/>
    <property type="status" value="JOINED"/>
    <property type="molecule type" value="Genomic_DNA"/>
</dbReference>
<dbReference type="EMBL" id="CR786566">
    <property type="protein sequence ID" value="CAM12945.1"/>
    <property type="molecule type" value="Genomic_DNA"/>
</dbReference>
<dbReference type="EMBL" id="CR376783">
    <property type="protein sequence ID" value="CAM12945.1"/>
    <property type="status" value="JOINED"/>
    <property type="molecule type" value="Genomic_DNA"/>
</dbReference>
<dbReference type="EMBL" id="BC093322">
    <property type="protein sequence ID" value="AAH93322.1"/>
    <property type="molecule type" value="mRNA"/>
</dbReference>
<dbReference type="RefSeq" id="NP_001017687.1">
    <property type="nucleotide sequence ID" value="NM_001017687.1"/>
</dbReference>
<dbReference type="SMR" id="Q566V0"/>
<dbReference type="FunCoup" id="Q566V0">
    <property type="interactions" value="118"/>
</dbReference>
<dbReference type="STRING" id="7955.ENSDARP00000020953"/>
<dbReference type="PaxDb" id="7955-ENSDARP00000020953"/>
<dbReference type="Ensembl" id="ENSDART00000017770">
    <property type="protein sequence ID" value="ENSDARP00000020953"/>
    <property type="gene ID" value="ENSDARG00000016368"/>
</dbReference>
<dbReference type="GeneID" id="550382"/>
<dbReference type="KEGG" id="dre:550382"/>
<dbReference type="AGR" id="ZFIN:ZDB-GENE-050417-176"/>
<dbReference type="CTD" id="339487"/>
<dbReference type="ZFIN" id="ZDB-GENE-050417-176">
    <property type="gene designation" value="zbtb8os"/>
</dbReference>
<dbReference type="eggNOG" id="KOG4528">
    <property type="taxonomic scope" value="Eukaryota"/>
</dbReference>
<dbReference type="HOGENOM" id="CLU_111362_0_0_1"/>
<dbReference type="InParanoid" id="Q566V0"/>
<dbReference type="OMA" id="AITYHKM"/>
<dbReference type="OrthoDB" id="2190767at2759"/>
<dbReference type="PhylomeDB" id="Q566V0"/>
<dbReference type="TreeFam" id="TF105957"/>
<dbReference type="PRO" id="PR:Q566V0"/>
<dbReference type="Proteomes" id="UP000000437">
    <property type="component" value="Chromosome 13"/>
</dbReference>
<dbReference type="Bgee" id="ENSDARG00000016368">
    <property type="expression patterns" value="Expressed in swim bladder and 28 other cell types or tissues"/>
</dbReference>
<dbReference type="GO" id="GO:0072669">
    <property type="term" value="C:tRNA-splicing ligase complex"/>
    <property type="evidence" value="ECO:0000250"/>
    <property type="project" value="UniProtKB"/>
</dbReference>
<dbReference type="GO" id="GO:0046872">
    <property type="term" value="F:metal ion binding"/>
    <property type="evidence" value="ECO:0007669"/>
    <property type="project" value="UniProtKB-KW"/>
</dbReference>
<dbReference type="GO" id="GO:0006388">
    <property type="term" value="P:tRNA splicing, via endonucleolytic cleavage and ligation"/>
    <property type="evidence" value="ECO:0000250"/>
    <property type="project" value="UniProtKB"/>
</dbReference>
<dbReference type="FunFam" id="3.55.10.10:FF:000001">
    <property type="entry name" value="protein archease isoform X1"/>
    <property type="match status" value="1"/>
</dbReference>
<dbReference type="Gene3D" id="3.55.10.10">
    <property type="entry name" value="Archease domain"/>
    <property type="match status" value="1"/>
</dbReference>
<dbReference type="InterPro" id="IPR002804">
    <property type="entry name" value="Archease"/>
</dbReference>
<dbReference type="InterPro" id="IPR023572">
    <property type="entry name" value="Archease_dom"/>
</dbReference>
<dbReference type="InterPro" id="IPR036820">
    <property type="entry name" value="Archease_dom_sf"/>
</dbReference>
<dbReference type="PANTHER" id="PTHR12682">
    <property type="entry name" value="ARCHEASE"/>
    <property type="match status" value="1"/>
</dbReference>
<dbReference type="PANTHER" id="PTHR12682:SF11">
    <property type="entry name" value="PROTEIN ARCHEASE"/>
    <property type="match status" value="1"/>
</dbReference>
<dbReference type="Pfam" id="PF01951">
    <property type="entry name" value="Archease"/>
    <property type="match status" value="1"/>
</dbReference>
<dbReference type="SUPFAM" id="SSF69819">
    <property type="entry name" value="MTH1598-like"/>
    <property type="match status" value="1"/>
</dbReference>
<name>ARCH_DANRE</name>
<organism>
    <name type="scientific">Danio rerio</name>
    <name type="common">Zebrafish</name>
    <name type="synonym">Brachydanio rerio</name>
    <dbReference type="NCBI Taxonomy" id="7955"/>
    <lineage>
        <taxon>Eukaryota</taxon>
        <taxon>Metazoa</taxon>
        <taxon>Chordata</taxon>
        <taxon>Craniata</taxon>
        <taxon>Vertebrata</taxon>
        <taxon>Euteleostomi</taxon>
        <taxon>Actinopterygii</taxon>
        <taxon>Neopterygii</taxon>
        <taxon>Teleostei</taxon>
        <taxon>Ostariophysi</taxon>
        <taxon>Cypriniformes</taxon>
        <taxon>Danionidae</taxon>
        <taxon>Danioninae</taxon>
        <taxon>Danio</taxon>
    </lineage>
</organism>
<evidence type="ECO:0000250" key="1"/>
<evidence type="ECO:0000305" key="2"/>
<keyword id="KW-0106">Calcium</keyword>
<keyword id="KW-0479">Metal-binding</keyword>
<keyword id="KW-1185">Reference proteome</keyword>
<keyword id="KW-0819">tRNA processing</keyword>
<reference key="1">
    <citation type="journal article" date="2013" name="Nature">
        <title>The zebrafish reference genome sequence and its relationship to the human genome.</title>
        <authorList>
            <person name="Howe K."/>
            <person name="Clark M.D."/>
            <person name="Torroja C.F."/>
            <person name="Torrance J."/>
            <person name="Berthelot C."/>
            <person name="Muffato M."/>
            <person name="Collins J.E."/>
            <person name="Humphray S."/>
            <person name="McLaren K."/>
            <person name="Matthews L."/>
            <person name="McLaren S."/>
            <person name="Sealy I."/>
            <person name="Caccamo M."/>
            <person name="Churcher C."/>
            <person name="Scott C."/>
            <person name="Barrett J.C."/>
            <person name="Koch R."/>
            <person name="Rauch G.J."/>
            <person name="White S."/>
            <person name="Chow W."/>
            <person name="Kilian B."/>
            <person name="Quintais L.T."/>
            <person name="Guerra-Assuncao J.A."/>
            <person name="Zhou Y."/>
            <person name="Gu Y."/>
            <person name="Yen J."/>
            <person name="Vogel J.H."/>
            <person name="Eyre T."/>
            <person name="Redmond S."/>
            <person name="Banerjee R."/>
            <person name="Chi J."/>
            <person name="Fu B."/>
            <person name="Langley E."/>
            <person name="Maguire S.F."/>
            <person name="Laird G.K."/>
            <person name="Lloyd D."/>
            <person name="Kenyon E."/>
            <person name="Donaldson S."/>
            <person name="Sehra H."/>
            <person name="Almeida-King J."/>
            <person name="Loveland J."/>
            <person name="Trevanion S."/>
            <person name="Jones M."/>
            <person name="Quail M."/>
            <person name="Willey D."/>
            <person name="Hunt A."/>
            <person name="Burton J."/>
            <person name="Sims S."/>
            <person name="McLay K."/>
            <person name="Plumb B."/>
            <person name="Davis J."/>
            <person name="Clee C."/>
            <person name="Oliver K."/>
            <person name="Clark R."/>
            <person name="Riddle C."/>
            <person name="Elliot D."/>
            <person name="Threadgold G."/>
            <person name="Harden G."/>
            <person name="Ware D."/>
            <person name="Begum S."/>
            <person name="Mortimore B."/>
            <person name="Kerry G."/>
            <person name="Heath P."/>
            <person name="Phillimore B."/>
            <person name="Tracey A."/>
            <person name="Corby N."/>
            <person name="Dunn M."/>
            <person name="Johnson C."/>
            <person name="Wood J."/>
            <person name="Clark S."/>
            <person name="Pelan S."/>
            <person name="Griffiths G."/>
            <person name="Smith M."/>
            <person name="Glithero R."/>
            <person name="Howden P."/>
            <person name="Barker N."/>
            <person name="Lloyd C."/>
            <person name="Stevens C."/>
            <person name="Harley J."/>
            <person name="Holt K."/>
            <person name="Panagiotidis G."/>
            <person name="Lovell J."/>
            <person name="Beasley H."/>
            <person name="Henderson C."/>
            <person name="Gordon D."/>
            <person name="Auger K."/>
            <person name="Wright D."/>
            <person name="Collins J."/>
            <person name="Raisen C."/>
            <person name="Dyer L."/>
            <person name="Leung K."/>
            <person name="Robertson L."/>
            <person name="Ambridge K."/>
            <person name="Leongamornlert D."/>
            <person name="McGuire S."/>
            <person name="Gilderthorp R."/>
            <person name="Griffiths C."/>
            <person name="Manthravadi D."/>
            <person name="Nichol S."/>
            <person name="Barker G."/>
            <person name="Whitehead S."/>
            <person name="Kay M."/>
            <person name="Brown J."/>
            <person name="Murnane C."/>
            <person name="Gray E."/>
            <person name="Humphries M."/>
            <person name="Sycamore N."/>
            <person name="Barker D."/>
            <person name="Saunders D."/>
            <person name="Wallis J."/>
            <person name="Babbage A."/>
            <person name="Hammond S."/>
            <person name="Mashreghi-Mohammadi M."/>
            <person name="Barr L."/>
            <person name="Martin S."/>
            <person name="Wray P."/>
            <person name="Ellington A."/>
            <person name="Matthews N."/>
            <person name="Ellwood M."/>
            <person name="Woodmansey R."/>
            <person name="Clark G."/>
            <person name="Cooper J."/>
            <person name="Tromans A."/>
            <person name="Grafham D."/>
            <person name="Skuce C."/>
            <person name="Pandian R."/>
            <person name="Andrews R."/>
            <person name="Harrison E."/>
            <person name="Kimberley A."/>
            <person name="Garnett J."/>
            <person name="Fosker N."/>
            <person name="Hall R."/>
            <person name="Garner P."/>
            <person name="Kelly D."/>
            <person name="Bird C."/>
            <person name="Palmer S."/>
            <person name="Gehring I."/>
            <person name="Berger A."/>
            <person name="Dooley C.M."/>
            <person name="Ersan-Urun Z."/>
            <person name="Eser C."/>
            <person name="Geiger H."/>
            <person name="Geisler M."/>
            <person name="Karotki L."/>
            <person name="Kirn A."/>
            <person name="Konantz J."/>
            <person name="Konantz M."/>
            <person name="Oberlander M."/>
            <person name="Rudolph-Geiger S."/>
            <person name="Teucke M."/>
            <person name="Lanz C."/>
            <person name="Raddatz G."/>
            <person name="Osoegawa K."/>
            <person name="Zhu B."/>
            <person name="Rapp A."/>
            <person name="Widaa S."/>
            <person name="Langford C."/>
            <person name="Yang F."/>
            <person name="Schuster S.C."/>
            <person name="Carter N.P."/>
            <person name="Harrow J."/>
            <person name="Ning Z."/>
            <person name="Herrero J."/>
            <person name="Searle S.M."/>
            <person name="Enright A."/>
            <person name="Geisler R."/>
            <person name="Plasterk R.H."/>
            <person name="Lee C."/>
            <person name="Westerfield M."/>
            <person name="de Jong P.J."/>
            <person name="Zon L.I."/>
            <person name="Postlethwait J.H."/>
            <person name="Nusslein-Volhard C."/>
            <person name="Hubbard T.J."/>
            <person name="Roest Crollius H."/>
            <person name="Rogers J."/>
            <person name="Stemple D.L."/>
        </authorList>
    </citation>
    <scope>NUCLEOTIDE SEQUENCE [LARGE SCALE GENOMIC DNA]</scope>
    <source>
        <strain>Tuebingen</strain>
    </source>
</reference>
<reference key="2">
    <citation type="submission" date="2005-04" db="EMBL/GenBank/DDBJ databases">
        <authorList>
            <consortium name="NIH - Zebrafish Gene Collection (ZGC) project"/>
        </authorList>
    </citation>
    <scope>NUCLEOTIDE SEQUENCE [LARGE SCALE MRNA]</scope>
    <source>
        <tissue>Olfactory epithelium</tissue>
    </source>
</reference>
<comment type="function">
    <text evidence="1">Component of the tRNA-splicing ligase complex required to facilitate the enzymatic turnover of catalytic subunit RTCB. Together with ddx1, acts by facilitating the guanylylation of RTCB, a key intermediate step in tRNA ligation (By similarity).</text>
</comment>
<comment type="subunit">
    <text evidence="1">Component of the tRNA-splicing ligase complex.</text>
</comment>
<comment type="similarity">
    <text evidence="2">Belongs to the archease family.</text>
</comment>
<protein>
    <recommendedName>
        <fullName>Protein archease</fullName>
    </recommendedName>
    <alternativeName>
        <fullName>Protein zbtb8os</fullName>
    </alternativeName>
</protein>
<sequence>MNDRELDLTEEQKALKAKYPPITKKYEYLDHTADVQIHSWGNSLEEAFEQCAMGMFGYMTDTETVEPIDTVEVESEGDDMESLLYHFLDDWLFKFSADIFFIPREVKVLHIDRMRYKIRSIGWGEEFSINKHPQGTEVKAITYSAMQIHETEQPEIFVIIDI</sequence>
<accession>Q566V0</accession>
<accession>A2CE72</accession>